<feature type="chain" id="PRO_0000097348" description="RINT1-like protein">
    <location>
        <begin position="1"/>
        <end position="724"/>
    </location>
</feature>
<feature type="domain" description="RINT1/TIP20" evidence="1">
    <location>
        <begin position="163"/>
        <end position="724"/>
    </location>
</feature>
<feature type="sequence conflict" description="In Ref. 3; AAK77245." evidence="3" ref="3">
    <original>K</original>
    <variation>N</variation>
    <location>
        <position position="285"/>
    </location>
</feature>
<reference key="1">
    <citation type="journal article" date="2000" name="Science">
        <title>The genome sequence of Drosophila melanogaster.</title>
        <authorList>
            <person name="Adams M.D."/>
            <person name="Celniker S.E."/>
            <person name="Holt R.A."/>
            <person name="Evans C.A."/>
            <person name="Gocayne J.D."/>
            <person name="Amanatides P.G."/>
            <person name="Scherer S.E."/>
            <person name="Li P.W."/>
            <person name="Hoskins R.A."/>
            <person name="Galle R.F."/>
            <person name="George R.A."/>
            <person name="Lewis S.E."/>
            <person name="Richards S."/>
            <person name="Ashburner M."/>
            <person name="Henderson S.N."/>
            <person name="Sutton G.G."/>
            <person name="Wortman J.R."/>
            <person name="Yandell M.D."/>
            <person name="Zhang Q."/>
            <person name="Chen L.X."/>
            <person name="Brandon R.C."/>
            <person name="Rogers Y.-H.C."/>
            <person name="Blazej R.G."/>
            <person name="Champe M."/>
            <person name="Pfeiffer B.D."/>
            <person name="Wan K.H."/>
            <person name="Doyle C."/>
            <person name="Baxter E.G."/>
            <person name="Helt G."/>
            <person name="Nelson C.R."/>
            <person name="Miklos G.L.G."/>
            <person name="Abril J.F."/>
            <person name="Agbayani A."/>
            <person name="An H.-J."/>
            <person name="Andrews-Pfannkoch C."/>
            <person name="Baldwin D."/>
            <person name="Ballew R.M."/>
            <person name="Basu A."/>
            <person name="Baxendale J."/>
            <person name="Bayraktaroglu L."/>
            <person name="Beasley E.M."/>
            <person name="Beeson K.Y."/>
            <person name="Benos P.V."/>
            <person name="Berman B.P."/>
            <person name="Bhandari D."/>
            <person name="Bolshakov S."/>
            <person name="Borkova D."/>
            <person name="Botchan M.R."/>
            <person name="Bouck J."/>
            <person name="Brokstein P."/>
            <person name="Brottier P."/>
            <person name="Burtis K.C."/>
            <person name="Busam D.A."/>
            <person name="Butler H."/>
            <person name="Cadieu E."/>
            <person name="Center A."/>
            <person name="Chandra I."/>
            <person name="Cherry J.M."/>
            <person name="Cawley S."/>
            <person name="Dahlke C."/>
            <person name="Davenport L.B."/>
            <person name="Davies P."/>
            <person name="de Pablos B."/>
            <person name="Delcher A."/>
            <person name="Deng Z."/>
            <person name="Mays A.D."/>
            <person name="Dew I."/>
            <person name="Dietz S.M."/>
            <person name="Dodson K."/>
            <person name="Doup L.E."/>
            <person name="Downes M."/>
            <person name="Dugan-Rocha S."/>
            <person name="Dunkov B.C."/>
            <person name="Dunn P."/>
            <person name="Durbin K.J."/>
            <person name="Evangelista C.C."/>
            <person name="Ferraz C."/>
            <person name="Ferriera S."/>
            <person name="Fleischmann W."/>
            <person name="Fosler C."/>
            <person name="Gabrielian A.E."/>
            <person name="Garg N.S."/>
            <person name="Gelbart W.M."/>
            <person name="Glasser K."/>
            <person name="Glodek A."/>
            <person name="Gong F."/>
            <person name="Gorrell J.H."/>
            <person name="Gu Z."/>
            <person name="Guan P."/>
            <person name="Harris M."/>
            <person name="Harris N.L."/>
            <person name="Harvey D.A."/>
            <person name="Heiman T.J."/>
            <person name="Hernandez J.R."/>
            <person name="Houck J."/>
            <person name="Hostin D."/>
            <person name="Houston K.A."/>
            <person name="Howland T.J."/>
            <person name="Wei M.-H."/>
            <person name="Ibegwam C."/>
            <person name="Jalali M."/>
            <person name="Kalush F."/>
            <person name="Karpen G.H."/>
            <person name="Ke Z."/>
            <person name="Kennison J.A."/>
            <person name="Ketchum K.A."/>
            <person name="Kimmel B.E."/>
            <person name="Kodira C.D."/>
            <person name="Kraft C.L."/>
            <person name="Kravitz S."/>
            <person name="Kulp D."/>
            <person name="Lai Z."/>
            <person name="Lasko P."/>
            <person name="Lei Y."/>
            <person name="Levitsky A.A."/>
            <person name="Li J.H."/>
            <person name="Li Z."/>
            <person name="Liang Y."/>
            <person name="Lin X."/>
            <person name="Liu X."/>
            <person name="Mattei B."/>
            <person name="McIntosh T.C."/>
            <person name="McLeod M.P."/>
            <person name="McPherson D."/>
            <person name="Merkulov G."/>
            <person name="Milshina N.V."/>
            <person name="Mobarry C."/>
            <person name="Morris J."/>
            <person name="Moshrefi A."/>
            <person name="Mount S.M."/>
            <person name="Moy M."/>
            <person name="Murphy B."/>
            <person name="Murphy L."/>
            <person name="Muzny D.M."/>
            <person name="Nelson D.L."/>
            <person name="Nelson D.R."/>
            <person name="Nelson K.A."/>
            <person name="Nixon K."/>
            <person name="Nusskern D.R."/>
            <person name="Pacleb J.M."/>
            <person name="Palazzolo M."/>
            <person name="Pittman G.S."/>
            <person name="Pan S."/>
            <person name="Pollard J."/>
            <person name="Puri V."/>
            <person name="Reese M.G."/>
            <person name="Reinert K."/>
            <person name="Remington K."/>
            <person name="Saunders R.D.C."/>
            <person name="Scheeler F."/>
            <person name="Shen H."/>
            <person name="Shue B.C."/>
            <person name="Siden-Kiamos I."/>
            <person name="Simpson M."/>
            <person name="Skupski M.P."/>
            <person name="Smith T.J."/>
            <person name="Spier E."/>
            <person name="Spradling A.C."/>
            <person name="Stapleton M."/>
            <person name="Strong R."/>
            <person name="Sun E."/>
            <person name="Svirskas R."/>
            <person name="Tector C."/>
            <person name="Turner R."/>
            <person name="Venter E."/>
            <person name="Wang A.H."/>
            <person name="Wang X."/>
            <person name="Wang Z.-Y."/>
            <person name="Wassarman D.A."/>
            <person name="Weinstock G.M."/>
            <person name="Weissenbach J."/>
            <person name="Williams S.M."/>
            <person name="Woodage T."/>
            <person name="Worley K.C."/>
            <person name="Wu D."/>
            <person name="Yang S."/>
            <person name="Yao Q.A."/>
            <person name="Ye J."/>
            <person name="Yeh R.-F."/>
            <person name="Zaveri J.S."/>
            <person name="Zhan M."/>
            <person name="Zhang G."/>
            <person name="Zhao Q."/>
            <person name="Zheng L."/>
            <person name="Zheng X.H."/>
            <person name="Zhong F.N."/>
            <person name="Zhong W."/>
            <person name="Zhou X."/>
            <person name="Zhu S.C."/>
            <person name="Zhu X."/>
            <person name="Smith H.O."/>
            <person name="Gibbs R.A."/>
            <person name="Myers E.W."/>
            <person name="Rubin G.M."/>
            <person name="Venter J.C."/>
        </authorList>
    </citation>
    <scope>NUCLEOTIDE SEQUENCE [LARGE SCALE GENOMIC DNA]</scope>
    <source>
        <strain>Berkeley</strain>
    </source>
</reference>
<reference key="2">
    <citation type="journal article" date="2002" name="Genome Biol.">
        <title>Annotation of the Drosophila melanogaster euchromatic genome: a systematic review.</title>
        <authorList>
            <person name="Misra S."/>
            <person name="Crosby M.A."/>
            <person name="Mungall C.J."/>
            <person name="Matthews B.B."/>
            <person name="Campbell K.S."/>
            <person name="Hradecky P."/>
            <person name="Huang Y."/>
            <person name="Kaminker J.S."/>
            <person name="Millburn G.H."/>
            <person name="Prochnik S.E."/>
            <person name="Smith C.D."/>
            <person name="Tupy J.L."/>
            <person name="Whitfield E.J."/>
            <person name="Bayraktaroglu L."/>
            <person name="Berman B.P."/>
            <person name="Bettencourt B.R."/>
            <person name="Celniker S.E."/>
            <person name="de Grey A.D.N.J."/>
            <person name="Drysdale R.A."/>
            <person name="Harris N.L."/>
            <person name="Richter J."/>
            <person name="Russo S."/>
            <person name="Schroeder A.J."/>
            <person name="Shu S.Q."/>
            <person name="Stapleton M."/>
            <person name="Yamada C."/>
            <person name="Ashburner M."/>
            <person name="Gelbart W.M."/>
            <person name="Rubin G.M."/>
            <person name="Lewis S.E."/>
        </authorList>
    </citation>
    <scope>GENOME REANNOTATION</scope>
    <source>
        <strain>Berkeley</strain>
    </source>
</reference>
<reference key="3">
    <citation type="journal article" date="2002" name="Genome Biol.">
        <title>A Drosophila full-length cDNA resource.</title>
        <authorList>
            <person name="Stapleton M."/>
            <person name="Carlson J.W."/>
            <person name="Brokstein P."/>
            <person name="Yu C."/>
            <person name="Champe M."/>
            <person name="George R.A."/>
            <person name="Guarin H."/>
            <person name="Kronmiller B."/>
            <person name="Pacleb J.M."/>
            <person name="Park S."/>
            <person name="Wan K.H."/>
            <person name="Rubin G.M."/>
            <person name="Celniker S.E."/>
        </authorList>
    </citation>
    <scope>NUCLEOTIDE SEQUENCE [LARGE SCALE MRNA]</scope>
    <source>
        <strain>Berkeley</strain>
        <tissue>Head</tissue>
    </source>
</reference>
<reference key="4">
    <citation type="journal article" date="2012" name="J. Cell Sci.">
        <title>The Drosophila RZZ complex - roles in membrane trafficking and cytokinesis.</title>
        <authorList>
            <person name="Wainman A."/>
            <person name="Giansanti M.G."/>
            <person name="Goldberg M.L."/>
            <person name="Gatti M."/>
        </authorList>
    </citation>
    <scope>FUNCTION</scope>
</reference>
<accession>Q9VS46</accession>
<accession>Q961W7</accession>
<dbReference type="EMBL" id="AE014296">
    <property type="protein sequence ID" value="AAF50583.2"/>
    <property type="molecule type" value="Genomic_DNA"/>
</dbReference>
<dbReference type="EMBL" id="AY047513">
    <property type="protein sequence ID" value="AAK77245.1"/>
    <property type="molecule type" value="mRNA"/>
</dbReference>
<dbReference type="RefSeq" id="NP_648102.2">
    <property type="nucleotide sequence ID" value="NM_139845.3"/>
</dbReference>
<dbReference type="SMR" id="Q9VS46"/>
<dbReference type="BioGRID" id="64247">
    <property type="interactions" value="5"/>
</dbReference>
<dbReference type="FunCoup" id="Q9VS46">
    <property type="interactions" value="2746"/>
</dbReference>
<dbReference type="IntAct" id="Q9VS46">
    <property type="interactions" value="3"/>
</dbReference>
<dbReference type="STRING" id="7227.FBpp0076549"/>
<dbReference type="PaxDb" id="7227-FBpp0076549"/>
<dbReference type="DNASU" id="38807"/>
<dbReference type="EnsemblMetazoa" id="FBtr0076838">
    <property type="protein sequence ID" value="FBpp0076549"/>
    <property type="gene ID" value="FBgn0035762"/>
</dbReference>
<dbReference type="GeneID" id="38807"/>
<dbReference type="KEGG" id="dme:Dmel_CG8605"/>
<dbReference type="UCSC" id="CG8605-RA">
    <property type="organism name" value="d. melanogaster"/>
</dbReference>
<dbReference type="AGR" id="FB:FBgn0035762"/>
<dbReference type="CTD" id="60561"/>
<dbReference type="FlyBase" id="FBgn0035762">
    <property type="gene designation" value="Rint1"/>
</dbReference>
<dbReference type="VEuPathDB" id="VectorBase:FBgn0035762"/>
<dbReference type="eggNOG" id="KOG2218">
    <property type="taxonomic scope" value="Eukaryota"/>
</dbReference>
<dbReference type="GeneTree" id="ENSGT00390000017006"/>
<dbReference type="HOGENOM" id="CLU_020201_0_0_1"/>
<dbReference type="InParanoid" id="Q9VS46"/>
<dbReference type="OMA" id="GMTWEVL"/>
<dbReference type="OrthoDB" id="2189254at2759"/>
<dbReference type="PhylomeDB" id="Q9VS46"/>
<dbReference type="Reactome" id="R-DME-6811434">
    <property type="pathway name" value="COPI-dependent Golgi-to-ER retrograde traffic"/>
</dbReference>
<dbReference type="BioGRID-ORCS" id="38807">
    <property type="hits" value="1 hit in 1 CRISPR screen"/>
</dbReference>
<dbReference type="ChiTaRS" id="Rint1">
    <property type="organism name" value="fly"/>
</dbReference>
<dbReference type="GenomeRNAi" id="38807"/>
<dbReference type="PRO" id="PR:Q9VS46"/>
<dbReference type="Proteomes" id="UP000000803">
    <property type="component" value="Chromosome 3L"/>
</dbReference>
<dbReference type="Bgee" id="FBgn0035762">
    <property type="expression patterns" value="Expressed in male accessory gland secondary cell (Drosophila) in male reproductive gland and 65 other cell types or tissues"/>
</dbReference>
<dbReference type="ExpressionAtlas" id="Q9VS46">
    <property type="expression patterns" value="baseline and differential"/>
</dbReference>
<dbReference type="GO" id="GO:0070939">
    <property type="term" value="C:Dsl1/NZR complex"/>
    <property type="evidence" value="ECO:0000250"/>
    <property type="project" value="FlyBase"/>
</dbReference>
<dbReference type="GO" id="GO:0005783">
    <property type="term" value="C:endoplasmic reticulum"/>
    <property type="evidence" value="ECO:0000250"/>
    <property type="project" value="FlyBase"/>
</dbReference>
<dbReference type="GO" id="GO:0036090">
    <property type="term" value="P:cleavage furrow ingression"/>
    <property type="evidence" value="ECO:0000315"/>
    <property type="project" value="FlyBase"/>
</dbReference>
<dbReference type="GO" id="GO:0006888">
    <property type="term" value="P:endoplasmic reticulum to Golgi vesicle-mediated transport"/>
    <property type="evidence" value="ECO:0007669"/>
    <property type="project" value="InterPro"/>
</dbReference>
<dbReference type="GO" id="GO:0007030">
    <property type="term" value="P:Golgi organization"/>
    <property type="evidence" value="ECO:0000315"/>
    <property type="project" value="FlyBase"/>
</dbReference>
<dbReference type="GO" id="GO:0048193">
    <property type="term" value="P:Golgi vesicle transport"/>
    <property type="evidence" value="ECO:0000250"/>
    <property type="project" value="FlyBase"/>
</dbReference>
<dbReference type="GO" id="GO:0007112">
    <property type="term" value="P:male meiosis cytokinesis"/>
    <property type="evidence" value="ECO:0000315"/>
    <property type="project" value="FlyBase"/>
</dbReference>
<dbReference type="GO" id="GO:0060628">
    <property type="term" value="P:regulation of ER to Golgi vesicle-mediated transport"/>
    <property type="evidence" value="ECO:0000318"/>
    <property type="project" value="GO_Central"/>
</dbReference>
<dbReference type="GO" id="GO:0006890">
    <property type="term" value="P:retrograde vesicle-mediated transport, Golgi to endoplasmic reticulum"/>
    <property type="evidence" value="ECO:0000318"/>
    <property type="project" value="GO_Central"/>
</dbReference>
<dbReference type="FunFam" id="1.20.58.670:FF:000003">
    <property type="entry name" value="RAD50-interacting protein 1"/>
    <property type="match status" value="1"/>
</dbReference>
<dbReference type="Gene3D" id="1.20.58.670">
    <property type="entry name" value="Dsl1p vesicle tethering complex, Tip20p subunit, domain D"/>
    <property type="match status" value="1"/>
</dbReference>
<dbReference type="InterPro" id="IPR042044">
    <property type="entry name" value="EXOC6PINT-1/Sec15/Tip20_C_dom2"/>
</dbReference>
<dbReference type="InterPro" id="IPR007528">
    <property type="entry name" value="RINT1_Tip20"/>
</dbReference>
<dbReference type="PANTHER" id="PTHR13520:SF0">
    <property type="entry name" value="RAD50-INTERACTING PROTEIN 1"/>
    <property type="match status" value="1"/>
</dbReference>
<dbReference type="PANTHER" id="PTHR13520">
    <property type="entry name" value="RAD50-INTERACTING PROTEIN 1 RINT-1"/>
    <property type="match status" value="1"/>
</dbReference>
<dbReference type="Pfam" id="PF04437">
    <property type="entry name" value="RINT1_TIP1"/>
    <property type="match status" value="1"/>
</dbReference>
<dbReference type="PROSITE" id="PS51386">
    <property type="entry name" value="RINT1_TIP20"/>
    <property type="match status" value="1"/>
</dbReference>
<gene>
    <name evidence="4" type="primary">Rint1</name>
    <name evidence="4" type="ORF">CG8605</name>
</gene>
<keyword id="KW-1185">Reference proteome</keyword>
<sequence>MHAELSEMELRIVARLNEEIGKDASQLHRASHLVSHYKKHLQVLSQTLDYEDPQNVSCYKTAFQCQQQVCESIDFELEKLAHFEDKLKRKLKECQPVLEGVAEDLDKVRQLQRLQQYLLLVQDIQEISAALGNAINGKDEDKLVNIYLTLYEGNDCEHSVVGRLHAVQAQSLKSFAERTAIYWHKLLLKRLSSAFEAVLKSMRWAHLEQQALNYSSARDTAKAQLLAEYMFLIKSPAEERAPLQSITPSIVCQPINRVVQLLLAPYRQRFQFHFTGTRQTNRLDKPEWFYTQILNWGKETHFFVGKTFQPAAIKAGKLDYNLRLEFIRGLVQLAIEKLAVDIEQIAQDQILFAHLLDETLAFESELRETFGYPASFPSAISVITQPMYLLRWISLEERFCAEKMDDILQAETPFQLIDPNSFENDLKIPKCADQFMRLLDAIKDRYYGLIQPGHQLQFLHLQLELIDSFRQRLVQLHSSGAVPSIPILNAINYLVMVLREWGENVHYLHLHAALAGPNATEINSVFEHAVAELEHWARQLMRNLATKATNEMKAKSMSYRRDAWPTMPEQNSREPFILSPSGGEMFQVLVTLLHNLERELSANLFTQTLRLIAHQIDDFMLESMVMNTKFSAAGAAQFNYDMTRNLFALFGQYTRRPELLFKRTHDACKLLAAARGTALLLLETLRGNQSVEEKTKPLRELHVLSMDSKQCIEVLERRMDIKMF</sequence>
<proteinExistence type="evidence at transcript level"/>
<comment type="function">
    <text evidence="2">During cytokinesis in male meiotic cells, required for completion of cleavage furrow ingression possibly in conjunction with Zw10. Required for maintenance of Golgi stack number and morphology. Essential for acroblast assembly.</text>
</comment>
<comment type="similarity">
    <text evidence="3">Belongs to the RINT1 family.</text>
</comment>
<evidence type="ECO:0000255" key="1">
    <source>
        <dbReference type="PROSITE-ProRule" id="PRU00717"/>
    </source>
</evidence>
<evidence type="ECO:0000269" key="2">
    <source>
    </source>
</evidence>
<evidence type="ECO:0000305" key="3"/>
<evidence type="ECO:0000312" key="4">
    <source>
        <dbReference type="FlyBase" id="FBgn0035762"/>
    </source>
</evidence>
<organism>
    <name type="scientific">Drosophila melanogaster</name>
    <name type="common">Fruit fly</name>
    <dbReference type="NCBI Taxonomy" id="7227"/>
    <lineage>
        <taxon>Eukaryota</taxon>
        <taxon>Metazoa</taxon>
        <taxon>Ecdysozoa</taxon>
        <taxon>Arthropoda</taxon>
        <taxon>Hexapoda</taxon>
        <taxon>Insecta</taxon>
        <taxon>Pterygota</taxon>
        <taxon>Neoptera</taxon>
        <taxon>Endopterygota</taxon>
        <taxon>Diptera</taxon>
        <taxon>Brachycera</taxon>
        <taxon>Muscomorpha</taxon>
        <taxon>Ephydroidea</taxon>
        <taxon>Drosophilidae</taxon>
        <taxon>Drosophila</taxon>
        <taxon>Sophophora</taxon>
    </lineage>
</organism>
<name>RINT1_DROME</name>
<protein>
    <recommendedName>
        <fullName>RINT1-like protein</fullName>
        <shortName>DmRINT-1</shortName>
    </recommendedName>
</protein>